<dbReference type="EC" id="2.1.1.56" evidence="2"/>
<dbReference type="EMBL" id="CH408156">
    <property type="protein sequence ID" value="EDK37247.2"/>
    <property type="molecule type" value="Genomic_DNA"/>
</dbReference>
<dbReference type="RefSeq" id="XP_001485674.1">
    <property type="nucleotide sequence ID" value="XM_001485624.1"/>
</dbReference>
<dbReference type="SMR" id="A5DDJ4"/>
<dbReference type="FunCoup" id="A5DDJ4">
    <property type="interactions" value="1043"/>
</dbReference>
<dbReference type="STRING" id="294746.A5DDJ4"/>
<dbReference type="GeneID" id="5128071"/>
<dbReference type="KEGG" id="pgu:PGUG_01345"/>
<dbReference type="VEuPathDB" id="FungiDB:PGUG_01345"/>
<dbReference type="eggNOG" id="KOG1975">
    <property type="taxonomic scope" value="Eukaryota"/>
</dbReference>
<dbReference type="HOGENOM" id="CLU_020346_2_0_1"/>
<dbReference type="InParanoid" id="A5DDJ4"/>
<dbReference type="OMA" id="VSINQAR"/>
<dbReference type="OrthoDB" id="10248867at2759"/>
<dbReference type="Proteomes" id="UP000001997">
    <property type="component" value="Unassembled WGS sequence"/>
</dbReference>
<dbReference type="GO" id="GO:0005634">
    <property type="term" value="C:nucleus"/>
    <property type="evidence" value="ECO:0007669"/>
    <property type="project" value="UniProtKB-SubCell"/>
</dbReference>
<dbReference type="GO" id="GO:0004482">
    <property type="term" value="F:mRNA 5'-cap (guanine-N7-)-methyltransferase activity"/>
    <property type="evidence" value="ECO:0007669"/>
    <property type="project" value="UniProtKB-EC"/>
</dbReference>
<dbReference type="GO" id="GO:0003723">
    <property type="term" value="F:RNA binding"/>
    <property type="evidence" value="ECO:0007669"/>
    <property type="project" value="UniProtKB-KW"/>
</dbReference>
<dbReference type="CDD" id="cd02440">
    <property type="entry name" value="AdoMet_MTases"/>
    <property type="match status" value="1"/>
</dbReference>
<dbReference type="FunFam" id="3.40.50.150:FF:000280">
    <property type="entry name" value="mRNA cap guanine-N7 methyltransferase"/>
    <property type="match status" value="1"/>
</dbReference>
<dbReference type="Gene3D" id="3.40.50.150">
    <property type="entry name" value="Vaccinia Virus protein VP39"/>
    <property type="match status" value="1"/>
</dbReference>
<dbReference type="InterPro" id="IPR004971">
    <property type="entry name" value="mRNA_G-N7_MeTrfase_dom"/>
</dbReference>
<dbReference type="InterPro" id="IPR016899">
    <property type="entry name" value="mRNA_G-N7_MeTrfase_euk"/>
</dbReference>
<dbReference type="InterPro" id="IPR039753">
    <property type="entry name" value="RG7MT1"/>
</dbReference>
<dbReference type="InterPro" id="IPR029063">
    <property type="entry name" value="SAM-dependent_MTases_sf"/>
</dbReference>
<dbReference type="PANTHER" id="PTHR12189:SF2">
    <property type="entry name" value="MRNA CAP GUANINE-N7 METHYLTRANSFERASE"/>
    <property type="match status" value="1"/>
</dbReference>
<dbReference type="PANTHER" id="PTHR12189">
    <property type="entry name" value="MRNA GUANINE-7- METHYLTRANSFERASE"/>
    <property type="match status" value="1"/>
</dbReference>
<dbReference type="Pfam" id="PF03291">
    <property type="entry name" value="mRNA_G-N7_MeTrfase"/>
    <property type="match status" value="1"/>
</dbReference>
<dbReference type="PIRSF" id="PIRSF028762">
    <property type="entry name" value="ABD1"/>
    <property type="match status" value="1"/>
</dbReference>
<dbReference type="SUPFAM" id="SSF53335">
    <property type="entry name" value="S-adenosyl-L-methionine-dependent methyltransferases"/>
    <property type="match status" value="1"/>
</dbReference>
<dbReference type="PROSITE" id="PS51562">
    <property type="entry name" value="RNA_CAP0_MT"/>
    <property type="match status" value="1"/>
</dbReference>
<protein>
    <recommendedName>
        <fullName>mRNA cap guanine-N(7) methyltransferase</fullName>
        <ecNumber evidence="2">2.1.1.56</ecNumber>
    </recommendedName>
    <alternativeName>
        <fullName>mRNA (guanine-N(7))-methyltransferase</fullName>
    </alternativeName>
    <alternativeName>
        <fullName>mRNA cap methyltransferase</fullName>
    </alternativeName>
</protein>
<feature type="chain" id="PRO_0000303913" description="mRNA cap guanine-N(7) methyltransferase">
    <location>
        <begin position="1"/>
        <end position="580"/>
    </location>
</feature>
<feature type="domain" description="mRNA cap 0 methyltransferase" evidence="3">
    <location>
        <begin position="271"/>
        <end position="579"/>
    </location>
</feature>
<feature type="region of interest" description="Disordered" evidence="4">
    <location>
        <begin position="1"/>
        <end position="222"/>
    </location>
</feature>
<feature type="compositionally biased region" description="Polar residues" evidence="4">
    <location>
        <begin position="1"/>
        <end position="17"/>
    </location>
</feature>
<feature type="compositionally biased region" description="Polar residues" evidence="4">
    <location>
        <begin position="25"/>
        <end position="53"/>
    </location>
</feature>
<feature type="compositionally biased region" description="Basic and acidic residues" evidence="4">
    <location>
        <begin position="54"/>
        <end position="67"/>
    </location>
</feature>
<feature type="compositionally biased region" description="Polar residues" evidence="4">
    <location>
        <begin position="69"/>
        <end position="90"/>
    </location>
</feature>
<feature type="compositionally biased region" description="Basic and acidic residues" evidence="4">
    <location>
        <begin position="102"/>
        <end position="154"/>
    </location>
</feature>
<feature type="compositionally biased region" description="Acidic residues" evidence="4">
    <location>
        <begin position="191"/>
        <end position="214"/>
    </location>
</feature>
<feature type="binding site" evidence="3">
    <location>
        <begin position="280"/>
        <end position="281"/>
    </location>
    <ligand>
        <name>mRNA</name>
        <dbReference type="ChEBI" id="CHEBI:33699"/>
    </ligand>
    <ligandPart>
        <name>mRNA cap</name>
    </ligandPart>
</feature>
<feature type="binding site" evidence="3">
    <location>
        <position position="284"/>
    </location>
    <ligand>
        <name>S-adenosyl-L-methionine</name>
        <dbReference type="ChEBI" id="CHEBI:59789"/>
    </ligand>
</feature>
<feature type="binding site" evidence="3">
    <location>
        <position position="308"/>
    </location>
    <ligand>
        <name>S-adenosyl-L-methionine</name>
        <dbReference type="ChEBI" id="CHEBI:59789"/>
    </ligand>
</feature>
<feature type="binding site" evidence="3">
    <location>
        <position position="330"/>
    </location>
    <ligand>
        <name>S-adenosyl-L-methionine</name>
        <dbReference type="ChEBI" id="CHEBI:59789"/>
    </ligand>
</feature>
<feature type="binding site" evidence="2">
    <location>
        <position position="376"/>
    </location>
    <ligand>
        <name>S-adenosyl-L-methionine</name>
        <dbReference type="ChEBI" id="CHEBI:59789"/>
    </ligand>
</feature>
<feature type="binding site" evidence="2">
    <location>
        <position position="406"/>
    </location>
    <ligand>
        <name>S-adenosyl-L-methionine</name>
        <dbReference type="ChEBI" id="CHEBI:59789"/>
    </ligand>
</feature>
<feature type="binding site" evidence="2">
    <location>
        <position position="411"/>
    </location>
    <ligand>
        <name>S-adenosyl-L-methionine</name>
        <dbReference type="ChEBI" id="CHEBI:59789"/>
    </ligand>
</feature>
<feature type="site" description="mRNA cap binding" evidence="3">
    <location>
        <position position="311"/>
    </location>
</feature>
<feature type="site" description="mRNA cap binding" evidence="3">
    <location>
        <position position="317"/>
    </location>
</feature>
<feature type="site" description="mRNA cap binding" evidence="3">
    <location>
        <position position="342"/>
    </location>
</feature>
<feature type="site" description="mRNA cap binding" evidence="3">
    <location>
        <position position="410"/>
    </location>
</feature>
<feature type="site" description="mRNA cap binding" evidence="3">
    <location>
        <position position="503"/>
    </location>
</feature>
<feature type="site" description="mRNA cap binding" evidence="3">
    <location>
        <position position="571"/>
    </location>
</feature>
<sequence length="580" mass="66197">MSGSKQGSEKASITSLIDSEEQGDEATSVSTQNQSPKTQITQTENVEVQNSDLKVTENKPKNTEMKPTDPNTNASTTENTPITTSNAQVSEKSEKTVPAWMREPEEAQNRYDRYVPRVDNRRRGEPRVAEVRQDPRYAKYLRQDQEERRIRRPDDEYEGDHKRRRPEMVTQFDDRRQGTRKNHPGQAGQSESEENGDEQQGDDEEETPGNEEPVEAQPYSRLATSVQSTQHYHTFQSHIANKENKDINSIVRSHYNQRTIQSKMQGSRTKSPIYKLRNFNNAVKYMLLGNHVRKNPNPGSPTVILDMCCGKGGDLNKAEFVGADQYVGIDISDASVKEAFHRYRRNKARFIPRDGGRAGQRDSRKYNFEACFATGDCFQQSIPEILEPNFPGIVNGLFPVDCVSIQFSMHYSFESEERVRTMLNNVSKSLRPGGTFVGTIPSSDFIRDKIVNKDFLPGTNNKFGNELYSVTFDRTPPSDGIFRPPFGNKYDYFLKDAVDNVPEYVVPFEVFRSMCEEVGLTLRYKKNFIEIFNQEIPKYFHKLNRNLVDGMKRADGKYGAEGAEKEAVSFYLGFAFEKLG</sequence>
<keyword id="KW-0489">Methyltransferase</keyword>
<keyword id="KW-0506">mRNA capping</keyword>
<keyword id="KW-0507">mRNA processing</keyword>
<keyword id="KW-0539">Nucleus</keyword>
<keyword id="KW-1185">Reference proteome</keyword>
<keyword id="KW-0694">RNA-binding</keyword>
<keyword id="KW-0949">S-adenosyl-L-methionine</keyword>
<keyword id="KW-0808">Transferase</keyword>
<gene>
    <name type="primary">ABD1</name>
    <name type="ORF">PGUG_01345</name>
</gene>
<evidence type="ECO:0000250" key="1"/>
<evidence type="ECO:0000250" key="2">
    <source>
        <dbReference type="UniProtKB" id="O43148"/>
    </source>
</evidence>
<evidence type="ECO:0000255" key="3">
    <source>
        <dbReference type="PROSITE-ProRule" id="PRU00895"/>
    </source>
</evidence>
<evidence type="ECO:0000256" key="4">
    <source>
        <dbReference type="SAM" id="MobiDB-lite"/>
    </source>
</evidence>
<comment type="function">
    <text evidence="1">Responsible for methylating the 5'-cap structure of mRNAs.</text>
</comment>
<comment type="catalytic activity">
    <reaction evidence="2 3">
        <text>a 5'-end (5'-triphosphoguanosine)-ribonucleoside in mRNA + S-adenosyl-L-methionine = a 5'-end (N(7)-methyl 5'-triphosphoguanosine)-ribonucleoside in mRNA + S-adenosyl-L-homocysteine</text>
        <dbReference type="Rhea" id="RHEA:67008"/>
        <dbReference type="Rhea" id="RHEA-COMP:17166"/>
        <dbReference type="Rhea" id="RHEA-COMP:17167"/>
        <dbReference type="ChEBI" id="CHEBI:57856"/>
        <dbReference type="ChEBI" id="CHEBI:59789"/>
        <dbReference type="ChEBI" id="CHEBI:156461"/>
        <dbReference type="ChEBI" id="CHEBI:167617"/>
        <dbReference type="EC" id="2.1.1.56"/>
    </reaction>
</comment>
<comment type="subcellular location">
    <subcellularLocation>
        <location evidence="1">Nucleus</location>
    </subcellularLocation>
</comment>
<comment type="similarity">
    <text evidence="3">Belongs to the class I-like SAM-binding methyltransferase superfamily. mRNA cap 0 methyltransferase family.</text>
</comment>
<proteinExistence type="inferred from homology"/>
<accession>A5DDJ4</accession>
<organism>
    <name type="scientific">Meyerozyma guilliermondii (strain ATCC 6260 / CBS 566 / DSM 6381 / JCM 1539 / NBRC 10279 / NRRL Y-324)</name>
    <name type="common">Yeast</name>
    <name type="synonym">Candida guilliermondii</name>
    <dbReference type="NCBI Taxonomy" id="294746"/>
    <lineage>
        <taxon>Eukaryota</taxon>
        <taxon>Fungi</taxon>
        <taxon>Dikarya</taxon>
        <taxon>Ascomycota</taxon>
        <taxon>Saccharomycotina</taxon>
        <taxon>Pichiomycetes</taxon>
        <taxon>Debaryomycetaceae</taxon>
        <taxon>Meyerozyma</taxon>
    </lineage>
</organism>
<name>MCES_PICGU</name>
<reference key="1">
    <citation type="journal article" date="2009" name="Nature">
        <title>Evolution of pathogenicity and sexual reproduction in eight Candida genomes.</title>
        <authorList>
            <person name="Butler G."/>
            <person name="Rasmussen M.D."/>
            <person name="Lin M.F."/>
            <person name="Santos M.A.S."/>
            <person name="Sakthikumar S."/>
            <person name="Munro C.A."/>
            <person name="Rheinbay E."/>
            <person name="Grabherr M."/>
            <person name="Forche A."/>
            <person name="Reedy J.L."/>
            <person name="Agrafioti I."/>
            <person name="Arnaud M.B."/>
            <person name="Bates S."/>
            <person name="Brown A.J.P."/>
            <person name="Brunke S."/>
            <person name="Costanzo M.C."/>
            <person name="Fitzpatrick D.A."/>
            <person name="de Groot P.W.J."/>
            <person name="Harris D."/>
            <person name="Hoyer L.L."/>
            <person name="Hube B."/>
            <person name="Klis F.M."/>
            <person name="Kodira C."/>
            <person name="Lennard N."/>
            <person name="Logue M.E."/>
            <person name="Martin R."/>
            <person name="Neiman A.M."/>
            <person name="Nikolaou E."/>
            <person name="Quail M.A."/>
            <person name="Quinn J."/>
            <person name="Santos M.C."/>
            <person name="Schmitzberger F.F."/>
            <person name="Sherlock G."/>
            <person name="Shah P."/>
            <person name="Silverstein K.A.T."/>
            <person name="Skrzypek M.S."/>
            <person name="Soll D."/>
            <person name="Staggs R."/>
            <person name="Stansfield I."/>
            <person name="Stumpf M.P.H."/>
            <person name="Sudbery P.E."/>
            <person name="Srikantha T."/>
            <person name="Zeng Q."/>
            <person name="Berman J."/>
            <person name="Berriman M."/>
            <person name="Heitman J."/>
            <person name="Gow N.A.R."/>
            <person name="Lorenz M.C."/>
            <person name="Birren B.W."/>
            <person name="Kellis M."/>
            <person name="Cuomo C.A."/>
        </authorList>
    </citation>
    <scope>NUCLEOTIDE SEQUENCE [LARGE SCALE GENOMIC DNA]</scope>
    <source>
        <strain>ATCC 6260 / CBS 566 / DSM 6381 / JCM 1539 / NBRC 10279 / NRRL Y-324</strain>
    </source>
</reference>